<organismHost>
    <name type="scientific">Homo sapiens</name>
    <name type="common">Human</name>
    <dbReference type="NCBI Taxonomy" id="9606"/>
</organismHost>
<proteinExistence type="inferred from homology"/>
<keyword id="KW-0067">ATP-binding</keyword>
<keyword id="KW-0235">DNA replication</keyword>
<keyword id="KW-0238">DNA-binding</keyword>
<keyword id="KW-0547">Nucleotide-binding</keyword>
<keyword id="KW-1185">Reference proteome</keyword>
<protein>
    <recommendedName>
        <fullName>Replication origin-binding protein</fullName>
        <shortName>OBP</shortName>
    </recommendedName>
</protein>
<gene>
    <name type="primary">U73</name>
    <name type="synonym">CH6R</name>
</gene>
<organism>
    <name type="scientific">Human herpesvirus 6B (strain Z29)</name>
    <name type="common">HHV-6 variant B</name>
    <name type="synonym">Human B lymphotropic virus</name>
    <dbReference type="NCBI Taxonomy" id="36351"/>
    <lineage>
        <taxon>Viruses</taxon>
        <taxon>Duplodnaviria</taxon>
        <taxon>Heunggongvirae</taxon>
        <taxon>Peploviricota</taxon>
        <taxon>Herviviricetes</taxon>
        <taxon>Herpesvirales</taxon>
        <taxon>Orthoherpesviridae</taxon>
        <taxon>Betaherpesvirinae</taxon>
        <taxon>Roseolovirus</taxon>
        <taxon>Roseolovirus humanbeta6b</taxon>
        <taxon>Human herpesvirus 6B</taxon>
    </lineage>
</organism>
<comment type="function">
    <text evidence="1">Probably involved in DNA replication. Binds the origin of replication (ori) (By similarity).</text>
</comment>
<comment type="similarity">
    <text evidence="3">Belongs to the herpesviridae OriBP family.</text>
</comment>
<name>OBP_HHV6Z</name>
<dbReference type="EMBL" id="AF157706">
    <property type="protein sequence ID" value="AAB06356.1"/>
    <property type="molecule type" value="Genomic_DNA"/>
</dbReference>
<dbReference type="PIR" id="T44218">
    <property type="entry name" value="T44218"/>
</dbReference>
<dbReference type="RefSeq" id="NP_050252.1">
    <property type="nucleotide sequence ID" value="NC_000898.1"/>
</dbReference>
<dbReference type="DNASU" id="1497073"/>
<dbReference type="GeneID" id="1497073"/>
<dbReference type="KEGG" id="vg:1497073"/>
<dbReference type="Proteomes" id="UP000006930">
    <property type="component" value="Segment"/>
</dbReference>
<dbReference type="GO" id="GO:0005524">
    <property type="term" value="F:ATP binding"/>
    <property type="evidence" value="ECO:0007669"/>
    <property type="project" value="UniProtKB-KW"/>
</dbReference>
<dbReference type="GO" id="GO:0016887">
    <property type="term" value="F:ATP hydrolysis activity"/>
    <property type="evidence" value="ECO:0007669"/>
    <property type="project" value="InterPro"/>
</dbReference>
<dbReference type="GO" id="GO:0003688">
    <property type="term" value="F:DNA replication origin binding"/>
    <property type="evidence" value="ECO:0007669"/>
    <property type="project" value="InterPro"/>
</dbReference>
<dbReference type="GO" id="GO:0006260">
    <property type="term" value="P:DNA replication"/>
    <property type="evidence" value="ECO:0007669"/>
    <property type="project" value="UniProtKB-KW"/>
</dbReference>
<dbReference type="Gene3D" id="3.40.50.300">
    <property type="entry name" value="P-loop containing nucleotide triphosphate hydrolases"/>
    <property type="match status" value="1"/>
</dbReference>
<dbReference type="InterPro" id="IPR003593">
    <property type="entry name" value="AAA+_ATPase"/>
</dbReference>
<dbReference type="InterPro" id="IPR014001">
    <property type="entry name" value="Helicase_ATP-bd"/>
</dbReference>
<dbReference type="InterPro" id="IPR027417">
    <property type="entry name" value="P-loop_NTPase"/>
</dbReference>
<dbReference type="InterPro" id="IPR003450">
    <property type="entry name" value="Replication_origin-bd"/>
</dbReference>
<dbReference type="Pfam" id="PF02399">
    <property type="entry name" value="Herpes_ori_bp"/>
    <property type="match status" value="1"/>
</dbReference>
<dbReference type="SMART" id="SM00382">
    <property type="entry name" value="AAA"/>
    <property type="match status" value="1"/>
</dbReference>
<dbReference type="SMART" id="SM00487">
    <property type="entry name" value="DEXDc"/>
    <property type="match status" value="1"/>
</dbReference>
<dbReference type="SUPFAM" id="SSF52540">
    <property type="entry name" value="P-loop containing nucleoside triphosphate hydrolases"/>
    <property type="match status" value="1"/>
</dbReference>
<dbReference type="PROSITE" id="PS51192">
    <property type="entry name" value="HELICASE_ATP_BIND_1"/>
    <property type="match status" value="1"/>
</dbReference>
<feature type="chain" id="PRO_0000115871" description="Replication origin-binding protein">
    <location>
        <begin position="1"/>
        <end position="780"/>
    </location>
</feature>
<feature type="domain" description="Helicase ATP-binding" evidence="2">
    <location>
        <begin position="39"/>
        <end position="195"/>
    </location>
</feature>
<feature type="binding site" evidence="2">
    <location>
        <begin position="52"/>
        <end position="59"/>
    </location>
    <ligand>
        <name>ATP</name>
        <dbReference type="ChEBI" id="CHEBI:30616"/>
    </ligand>
</feature>
<reference key="1">
    <citation type="journal article" date="1996" name="Arch. Virol.">
        <title>Restriction endonuclease mapping and molecular cloning of the human herpesvirus 6 variant B strain Z29 genome.</title>
        <authorList>
            <person name="Lindquester G.J."/>
            <person name="Inoue N."/>
            <person name="Allen R.D."/>
            <person name="Castelli J.W."/>
            <person name="Stamey F.R."/>
            <person name="Dambaugh T.R."/>
            <person name="O'Brian J.J."/>
            <person name="Danovich R.M."/>
            <person name="Frenkel N."/>
            <person name="Pellett P.E."/>
        </authorList>
    </citation>
    <scope>NUCLEOTIDE SEQUENCE [GENOMIC DNA]</scope>
</reference>
<reference key="2">
    <citation type="journal article" date="1999" name="J. Virol.">
        <title>Human herpesvirus 6B genome sequence: coding content and comparison with human herpesvirus 6A.</title>
        <authorList>
            <person name="Dominguez G."/>
            <person name="Dambaugh T.R."/>
            <person name="Stamey F.R."/>
            <person name="Dewhurst S."/>
            <person name="Inoue N."/>
            <person name="Pellett P.E."/>
        </authorList>
    </citation>
    <scope>NUCLEOTIDE SEQUENCE [LARGE SCALE GENOMIC DNA]</scope>
</reference>
<accession>P52452</accession>
<evidence type="ECO:0000250" key="1"/>
<evidence type="ECO:0000255" key="2">
    <source>
        <dbReference type="PROSITE-ProRule" id="PRU00541"/>
    </source>
</evidence>
<evidence type="ECO:0000305" key="3"/>
<sequence length="780" mass="89554">MENRFQNDTLFSEWFGQSLSDVRFPDNVTVYSQADSAVSFENVRQPIKLVRAAMGSGKTTALIHFLKQVPKELSVLLISCRKTFAAEILHRFTLNGLEDFELYCDITERQINNRKVIVQIESLHRLTENYDVLILDEIMSIIKQFYSKTMTKTKEVDCKFLSLIKNSSHVIAMDATLTRHVVEFFAAFKPDTQIALIRNTFVSAMFSNRVAYFCDTFFGKEFSFFARLEDKLRWDKKLCLFCSTVLAAEYMHDLIRSRFSLKKVLLLTSKQGKCSSIESWIRYDVVIYTSVVTVGLSFEPVYFSSLFVYIQLAKGGPDMVSIFQSIGRVRRVIDEDIYIYMNPVLIKSYDPLAPIAMPPCSDWSVAEQSIISESCIDFRGKCSGAHKYNFCSVLKCLFRYRHYIEKTTITSLSDSLFLLCSLLCENSIKVDIVGNGFPMRKEVFLSFLQILVEECHFIEKKITLPGDNMTFQEIISSRETIMNGDFYENGNQLLHKDYITDMGKFRATFLSPGVDIFIASDIVSDLKNESKRYVFVNVWLQKCVSAGVESTRIERVFNERIKSYVLPKSFLCDEYFVLGDISGVYEWGMLIDLAFLAEMIRKDLKLKSCTDTTTDISEDDLLLCAARRSSDILQIMQLVFTVHVQFFQRYSLQTLQLFNKLRGMRIVTGVFSIEKFSISILRLFFKCAFNMTLSASKPRYIPGKAYRNLTKNDLENMLDNWEISRTNLKTCKELRKALTEASRARRKQTIYKLQGSDISLSVSEVGVFGQHASPGVCVSS</sequence>